<organism>
    <name type="scientific">Schizosaccharomyces pombe (strain 972 / ATCC 24843)</name>
    <name type="common">Fission yeast</name>
    <dbReference type="NCBI Taxonomy" id="284812"/>
    <lineage>
        <taxon>Eukaryota</taxon>
        <taxon>Fungi</taxon>
        <taxon>Dikarya</taxon>
        <taxon>Ascomycota</taxon>
        <taxon>Taphrinomycotina</taxon>
        <taxon>Schizosaccharomycetes</taxon>
        <taxon>Schizosaccharomycetales</taxon>
        <taxon>Schizosaccharomycetaceae</taxon>
        <taxon>Schizosaccharomyces</taxon>
    </lineage>
</organism>
<reference key="1">
    <citation type="journal article" date="2002" name="Nature">
        <title>The genome sequence of Schizosaccharomyces pombe.</title>
        <authorList>
            <person name="Wood V."/>
            <person name="Gwilliam R."/>
            <person name="Rajandream M.A."/>
            <person name="Lyne M.H."/>
            <person name="Lyne R."/>
            <person name="Stewart A."/>
            <person name="Sgouros J.G."/>
            <person name="Peat N."/>
            <person name="Hayles J."/>
            <person name="Baker S.G."/>
            <person name="Basham D."/>
            <person name="Bowman S."/>
            <person name="Brooks K."/>
            <person name="Brown D."/>
            <person name="Brown S."/>
            <person name="Chillingworth T."/>
            <person name="Churcher C.M."/>
            <person name="Collins M."/>
            <person name="Connor R."/>
            <person name="Cronin A."/>
            <person name="Davis P."/>
            <person name="Feltwell T."/>
            <person name="Fraser A."/>
            <person name="Gentles S."/>
            <person name="Goble A."/>
            <person name="Hamlin N."/>
            <person name="Harris D.E."/>
            <person name="Hidalgo J."/>
            <person name="Hodgson G."/>
            <person name="Holroyd S."/>
            <person name="Hornsby T."/>
            <person name="Howarth S."/>
            <person name="Huckle E.J."/>
            <person name="Hunt S."/>
            <person name="Jagels K."/>
            <person name="James K.D."/>
            <person name="Jones L."/>
            <person name="Jones M."/>
            <person name="Leather S."/>
            <person name="McDonald S."/>
            <person name="McLean J."/>
            <person name="Mooney P."/>
            <person name="Moule S."/>
            <person name="Mungall K.L."/>
            <person name="Murphy L.D."/>
            <person name="Niblett D."/>
            <person name="Odell C."/>
            <person name="Oliver K."/>
            <person name="O'Neil S."/>
            <person name="Pearson D."/>
            <person name="Quail M.A."/>
            <person name="Rabbinowitsch E."/>
            <person name="Rutherford K.M."/>
            <person name="Rutter S."/>
            <person name="Saunders D."/>
            <person name="Seeger K."/>
            <person name="Sharp S."/>
            <person name="Skelton J."/>
            <person name="Simmonds M.N."/>
            <person name="Squares R."/>
            <person name="Squares S."/>
            <person name="Stevens K."/>
            <person name="Taylor K."/>
            <person name="Taylor R.G."/>
            <person name="Tivey A."/>
            <person name="Walsh S.V."/>
            <person name="Warren T."/>
            <person name="Whitehead S."/>
            <person name="Woodward J.R."/>
            <person name="Volckaert G."/>
            <person name="Aert R."/>
            <person name="Robben J."/>
            <person name="Grymonprez B."/>
            <person name="Weltjens I."/>
            <person name="Vanstreels E."/>
            <person name="Rieger M."/>
            <person name="Schaefer M."/>
            <person name="Mueller-Auer S."/>
            <person name="Gabel C."/>
            <person name="Fuchs M."/>
            <person name="Duesterhoeft A."/>
            <person name="Fritzc C."/>
            <person name="Holzer E."/>
            <person name="Moestl D."/>
            <person name="Hilbert H."/>
            <person name="Borzym K."/>
            <person name="Langer I."/>
            <person name="Beck A."/>
            <person name="Lehrach H."/>
            <person name="Reinhardt R."/>
            <person name="Pohl T.M."/>
            <person name="Eger P."/>
            <person name="Zimmermann W."/>
            <person name="Wedler H."/>
            <person name="Wambutt R."/>
            <person name="Purnelle B."/>
            <person name="Goffeau A."/>
            <person name="Cadieu E."/>
            <person name="Dreano S."/>
            <person name="Gloux S."/>
            <person name="Lelaure V."/>
            <person name="Mottier S."/>
            <person name="Galibert F."/>
            <person name="Aves S.J."/>
            <person name="Xiang Z."/>
            <person name="Hunt C."/>
            <person name="Moore K."/>
            <person name="Hurst S.M."/>
            <person name="Lucas M."/>
            <person name="Rochet M."/>
            <person name="Gaillardin C."/>
            <person name="Tallada V.A."/>
            <person name="Garzon A."/>
            <person name="Thode G."/>
            <person name="Daga R.R."/>
            <person name="Cruzado L."/>
            <person name="Jimenez J."/>
            <person name="Sanchez M."/>
            <person name="del Rey F."/>
            <person name="Benito J."/>
            <person name="Dominguez A."/>
            <person name="Revuelta J.L."/>
            <person name="Moreno S."/>
            <person name="Armstrong J."/>
            <person name="Forsburg S.L."/>
            <person name="Cerutti L."/>
            <person name="Lowe T."/>
            <person name="McCombie W.R."/>
            <person name="Paulsen I."/>
            <person name="Potashkin J."/>
            <person name="Shpakovski G.V."/>
            <person name="Ussery D."/>
            <person name="Barrell B.G."/>
            <person name="Nurse P."/>
        </authorList>
    </citation>
    <scope>NUCLEOTIDE SEQUENCE [LARGE SCALE GENOMIC DNA]</scope>
    <source>
        <strain>972 / ATCC 24843</strain>
    </source>
</reference>
<reference key="2">
    <citation type="journal article" date="2006" name="Nat. Biotechnol.">
        <title>ORFeome cloning and global analysis of protein localization in the fission yeast Schizosaccharomyces pombe.</title>
        <authorList>
            <person name="Matsuyama A."/>
            <person name="Arai R."/>
            <person name="Yashiroda Y."/>
            <person name="Shirai A."/>
            <person name="Kamata A."/>
            <person name="Sekido S."/>
            <person name="Kobayashi Y."/>
            <person name="Hashimoto A."/>
            <person name="Hamamoto M."/>
            <person name="Hiraoka Y."/>
            <person name="Horinouchi S."/>
            <person name="Yoshida M."/>
        </authorList>
    </citation>
    <scope>SUBCELLULAR LOCATION [LARGE SCALE ANALYSIS]</scope>
</reference>
<reference key="3">
    <citation type="journal article" date="2008" name="J. Proteome Res.">
        <title>Phosphoproteome analysis of fission yeast.</title>
        <authorList>
            <person name="Wilson-Grady J.T."/>
            <person name="Villen J."/>
            <person name="Gygi S.P."/>
        </authorList>
    </citation>
    <scope>PHOSPHORYLATION [LARGE SCALE ANALYSIS] AT SER-129</scope>
    <scope>IDENTIFICATION BY MASS SPECTROMETRY</scope>
</reference>
<comment type="function">
    <text evidence="1">Putative cation exchanger.</text>
</comment>
<comment type="subcellular location">
    <subcellularLocation>
        <location evidence="4">Endoplasmic reticulum membrane</location>
        <topology evidence="4">Multi-pass membrane protein</topology>
    </subcellularLocation>
</comment>
<comment type="similarity">
    <text evidence="6">Belongs to the Ca(2+):cation antiporter (CaCA) (TC 2.A.19) family.</text>
</comment>
<evidence type="ECO:0000250" key="1"/>
<evidence type="ECO:0000255" key="2"/>
<evidence type="ECO:0000256" key="3">
    <source>
        <dbReference type="SAM" id="MobiDB-lite"/>
    </source>
</evidence>
<evidence type="ECO:0000269" key="4">
    <source>
    </source>
</evidence>
<evidence type="ECO:0000269" key="5">
    <source>
    </source>
</evidence>
<evidence type="ECO:0000305" key="6"/>
<proteinExistence type="evidence at protein level"/>
<dbReference type="EMBL" id="CU329670">
    <property type="protein sequence ID" value="CAB86468.1"/>
    <property type="molecule type" value="Genomic_DNA"/>
</dbReference>
<dbReference type="SMR" id="Q9P7B3"/>
<dbReference type="BioGRID" id="279765">
    <property type="interactions" value="6"/>
</dbReference>
<dbReference type="FunCoup" id="Q9P7B3">
    <property type="interactions" value="147"/>
</dbReference>
<dbReference type="STRING" id="284812.Q9P7B3"/>
<dbReference type="iPTMnet" id="Q9P7B3"/>
<dbReference type="PaxDb" id="4896-SPAC521.04c.1"/>
<dbReference type="EnsemblFungi" id="SPAC521.04c.1">
    <property type="protein sequence ID" value="SPAC521.04c.1:pep"/>
    <property type="gene ID" value="SPAC521.04c"/>
</dbReference>
<dbReference type="KEGG" id="spo:2543342"/>
<dbReference type="PomBase" id="SPAC521.04c"/>
<dbReference type="VEuPathDB" id="FungiDB:SPAC521.04c"/>
<dbReference type="eggNOG" id="KOG1397">
    <property type="taxonomic scope" value="Eukaryota"/>
</dbReference>
<dbReference type="HOGENOM" id="CLU_001583_0_0_1"/>
<dbReference type="InParanoid" id="Q9P7B3"/>
<dbReference type="OMA" id="PQWDMIT"/>
<dbReference type="PhylomeDB" id="Q9P7B3"/>
<dbReference type="PRO" id="PR:Q9P7B3"/>
<dbReference type="Proteomes" id="UP000002485">
    <property type="component" value="Chromosome I"/>
</dbReference>
<dbReference type="GO" id="GO:0012505">
    <property type="term" value="C:endomembrane system"/>
    <property type="evidence" value="ECO:0000318"/>
    <property type="project" value="GO_Central"/>
</dbReference>
<dbReference type="GO" id="GO:0005783">
    <property type="term" value="C:endoplasmic reticulum"/>
    <property type="evidence" value="ECO:0007005"/>
    <property type="project" value="PomBase"/>
</dbReference>
<dbReference type="GO" id="GO:0005789">
    <property type="term" value="C:endoplasmic reticulum membrane"/>
    <property type="evidence" value="ECO:0007669"/>
    <property type="project" value="UniProtKB-SubCell"/>
</dbReference>
<dbReference type="GO" id="GO:0005774">
    <property type="term" value="C:vacuolar membrane"/>
    <property type="evidence" value="ECO:0000250"/>
    <property type="project" value="PomBase"/>
</dbReference>
<dbReference type="GO" id="GO:0015369">
    <property type="term" value="F:calcium:proton antiporter activity"/>
    <property type="evidence" value="ECO:0000318"/>
    <property type="project" value="GO_Central"/>
</dbReference>
<dbReference type="GO" id="GO:0070588">
    <property type="term" value="P:calcium ion transmembrane transport"/>
    <property type="evidence" value="ECO:0000318"/>
    <property type="project" value="GO_Central"/>
</dbReference>
<dbReference type="GO" id="GO:0006874">
    <property type="term" value="P:intracellular calcium ion homeostasis"/>
    <property type="evidence" value="ECO:0000318"/>
    <property type="project" value="GO_Central"/>
</dbReference>
<dbReference type="FunFam" id="1.20.1420.30:FF:000014">
    <property type="entry name" value="Cation/H+ exchanger protein 2"/>
    <property type="match status" value="1"/>
</dbReference>
<dbReference type="Gene3D" id="1.20.1420.30">
    <property type="entry name" value="NCX, central ion-binding region"/>
    <property type="match status" value="2"/>
</dbReference>
<dbReference type="InterPro" id="IPR004713">
    <property type="entry name" value="CaH_exchang"/>
</dbReference>
<dbReference type="InterPro" id="IPR004837">
    <property type="entry name" value="NaCa_Exmemb"/>
</dbReference>
<dbReference type="InterPro" id="IPR044880">
    <property type="entry name" value="NCX_ion-bd_dom_sf"/>
</dbReference>
<dbReference type="InterPro" id="IPR005185">
    <property type="entry name" value="YccF"/>
</dbReference>
<dbReference type="PANTHER" id="PTHR31503">
    <property type="entry name" value="VACUOLAR CALCIUM ION TRANSPORTER"/>
    <property type="match status" value="1"/>
</dbReference>
<dbReference type="PANTHER" id="PTHR31503:SF10">
    <property type="entry name" value="VNX1 PROTEIN"/>
    <property type="match status" value="1"/>
</dbReference>
<dbReference type="Pfam" id="PF01699">
    <property type="entry name" value="Na_Ca_ex"/>
    <property type="match status" value="2"/>
</dbReference>
<dbReference type="Pfam" id="PF03733">
    <property type="entry name" value="YccF"/>
    <property type="match status" value="1"/>
</dbReference>
<name>YI14_SCHPO</name>
<protein>
    <recommendedName>
        <fullName>Putative cation exchanger C521.04c</fullName>
    </recommendedName>
</protein>
<sequence length="881" mass="98858">MSQPADINQSESSAETITQGRRADRPEETPSSSVYEQNLRFGDFLMPTVGDADATDSLSQSTNDRDIYSPREIDQYTRKVSSRTDPSTSTISNARQHPRNSVSRLSRSSSNVRQQRDIPKQNFKVRPLSPLRGQSPASLRSEESFTLKERQNAINKTRAFGMRLWKPALYKKFRSINRDADIDIHDEPLKRPNTSISNVIWLICFGAPLFLVIFICYIFFTVLSFFNVPDAIVYSKLCRGLMFYLLYPFGQHVRHKVKRLSVRSPAHPIYQTQHSHYDETPTSHHPDPARLNFLSFSFCVNPMNQSLDCNTTPHRRNASSIIYTLMYYLIIAPTLLITSAICMFTIFFVPCARTLWAICRHLRTCPLSLSFRPNLALPLSMDSSDVVLLCVKKAASWKYYKYTIDGIYIIYFDMLALIIPTIFFGFFGSQGHWFTSSVFLFTASLVSIIPLAYFIGMAVASISAQSSMGMGAFINAFFGSVIEVFLYSVALRKGNAGLVEGSVIGSILAGLLLMPGLSMCAGAIRKKFQFFNIKSAGATSTMLLFAVLGAFAPTMLFRIYGPFRLDCEPCGANCQKCTKHYVLENDSLYKNRVLPFTYCCSIMLVLAYAIGLWFTLRTHASHIWQNFTADDISFLKAEEEVGEPVNQDTAGNMSDSSEGGEAVVNGNSQHHHNRDDASSGLSSNGSENESLEHEPTNELPQRPLVNQSQNSHGDDAPNWSRSKSAIILLSATFLYSLIAEILVEHVDTVLDKFAISEKFLGLTLFALVPNTTEFMNAISFALNENIALSMEIGSAYALQVCLLQIPCLMGYSLFQYYRSGDSISFKHLFTMVFPTWDMICVMICVFLLTYVHSEGKSNYFKGSILVLAYLVSMLGFTFFNY</sequence>
<feature type="chain" id="PRO_0000317131" description="Putative cation exchanger C521.04c">
    <location>
        <begin position="1"/>
        <end position="881"/>
    </location>
</feature>
<feature type="transmembrane region" description="Helical" evidence="2">
    <location>
        <begin position="200"/>
        <end position="220"/>
    </location>
</feature>
<feature type="transmembrane region" description="Helical" evidence="2">
    <location>
        <begin position="329"/>
        <end position="349"/>
    </location>
</feature>
<feature type="transmembrane region" description="Helical" evidence="2">
    <location>
        <begin position="407"/>
        <end position="427"/>
    </location>
</feature>
<feature type="transmembrane region" description="Helical" evidence="2">
    <location>
        <begin position="438"/>
        <end position="458"/>
    </location>
</feature>
<feature type="transmembrane region" description="Helical" evidence="2">
    <location>
        <begin position="471"/>
        <end position="491"/>
    </location>
</feature>
<feature type="transmembrane region" description="Helical" evidence="2">
    <location>
        <begin position="504"/>
        <end position="524"/>
    </location>
</feature>
<feature type="transmembrane region" description="Helical" evidence="2">
    <location>
        <begin position="537"/>
        <end position="557"/>
    </location>
</feature>
<feature type="transmembrane region" description="Helical" evidence="2">
    <location>
        <begin position="594"/>
        <end position="614"/>
    </location>
</feature>
<feature type="transmembrane region" description="Helical" evidence="2">
    <location>
        <begin position="726"/>
        <end position="746"/>
    </location>
</feature>
<feature type="transmembrane region" description="Helical" evidence="2">
    <location>
        <begin position="762"/>
        <end position="782"/>
    </location>
</feature>
<feature type="transmembrane region" description="Helical" evidence="2">
    <location>
        <begin position="794"/>
        <end position="814"/>
    </location>
</feature>
<feature type="transmembrane region" description="Helical" evidence="2">
    <location>
        <begin position="828"/>
        <end position="848"/>
    </location>
</feature>
<feature type="transmembrane region" description="Helical" evidence="2">
    <location>
        <begin position="859"/>
        <end position="879"/>
    </location>
</feature>
<feature type="region of interest" description="Disordered" evidence="3">
    <location>
        <begin position="1"/>
        <end position="39"/>
    </location>
</feature>
<feature type="region of interest" description="Disordered" evidence="3">
    <location>
        <begin position="52"/>
        <end position="142"/>
    </location>
</feature>
<feature type="region of interest" description="Disordered" evidence="3">
    <location>
        <begin position="641"/>
        <end position="717"/>
    </location>
</feature>
<feature type="compositionally biased region" description="Polar residues" evidence="3">
    <location>
        <begin position="1"/>
        <end position="19"/>
    </location>
</feature>
<feature type="compositionally biased region" description="Basic and acidic residues" evidence="3">
    <location>
        <begin position="63"/>
        <end position="77"/>
    </location>
</feature>
<feature type="compositionally biased region" description="Polar residues" evidence="3">
    <location>
        <begin position="83"/>
        <end position="95"/>
    </location>
</feature>
<feature type="compositionally biased region" description="Low complexity" evidence="3">
    <location>
        <begin position="99"/>
        <end position="113"/>
    </location>
</feature>
<feature type="compositionally biased region" description="Polar residues" evidence="3">
    <location>
        <begin position="646"/>
        <end position="657"/>
    </location>
</feature>
<feature type="compositionally biased region" description="Low complexity" evidence="3">
    <location>
        <begin position="678"/>
        <end position="688"/>
    </location>
</feature>
<feature type="modified residue" description="Phosphoserine" evidence="5">
    <location>
        <position position="129"/>
    </location>
</feature>
<gene>
    <name type="ORF">SPAC521.04c</name>
</gene>
<accession>Q9P7B3</accession>
<keyword id="KW-0256">Endoplasmic reticulum</keyword>
<keyword id="KW-0406">Ion transport</keyword>
<keyword id="KW-0472">Membrane</keyword>
<keyword id="KW-0597">Phosphoprotein</keyword>
<keyword id="KW-1185">Reference proteome</keyword>
<keyword id="KW-0812">Transmembrane</keyword>
<keyword id="KW-1133">Transmembrane helix</keyword>
<keyword id="KW-0813">Transport</keyword>